<feature type="chain" id="PRO_0000256007" description="ATP-dependent RNA helicase HAS1">
    <location>
        <begin position="1"/>
        <end position="610"/>
    </location>
</feature>
<feature type="domain" description="Helicase ATP-binding" evidence="2">
    <location>
        <begin position="162"/>
        <end position="337"/>
    </location>
</feature>
<feature type="domain" description="Helicase C-terminal" evidence="3">
    <location>
        <begin position="351"/>
        <end position="521"/>
    </location>
</feature>
<feature type="region of interest" description="Disordered" evidence="4">
    <location>
        <begin position="1"/>
        <end position="81"/>
    </location>
</feature>
<feature type="region of interest" description="Disordered" evidence="4">
    <location>
        <begin position="112"/>
        <end position="131"/>
    </location>
</feature>
<feature type="region of interest" description="Disordered" evidence="4">
    <location>
        <begin position="584"/>
        <end position="610"/>
    </location>
</feature>
<feature type="short sequence motif" description="Q motif">
    <location>
        <begin position="131"/>
        <end position="159"/>
    </location>
</feature>
<feature type="short sequence motif" description="DEAD box">
    <location>
        <begin position="285"/>
        <end position="288"/>
    </location>
</feature>
<feature type="compositionally biased region" description="Basic residues" evidence="4">
    <location>
        <begin position="9"/>
        <end position="18"/>
    </location>
</feature>
<feature type="compositionally biased region" description="Acidic residues" evidence="4">
    <location>
        <begin position="51"/>
        <end position="76"/>
    </location>
</feature>
<feature type="compositionally biased region" description="Basic and acidic residues" evidence="4">
    <location>
        <begin position="584"/>
        <end position="594"/>
    </location>
</feature>
<feature type="binding site" evidence="2">
    <location>
        <begin position="175"/>
        <end position="182"/>
    </location>
    <ligand>
        <name>ATP</name>
        <dbReference type="ChEBI" id="CHEBI:30616"/>
    </ligand>
</feature>
<gene>
    <name type="primary">HAS1</name>
    <name type="ORF">SNOG_05766</name>
</gene>
<protein>
    <recommendedName>
        <fullName>ATP-dependent RNA helicase HAS1</fullName>
        <ecNumber>3.6.4.13</ecNumber>
    </recommendedName>
</protein>
<dbReference type="EC" id="3.6.4.13"/>
<dbReference type="EMBL" id="CH445332">
    <property type="protein sequence ID" value="EAT86830.2"/>
    <property type="status" value="ALT_SEQ"/>
    <property type="molecule type" value="Genomic_DNA"/>
</dbReference>
<dbReference type="RefSeq" id="XP_001796163.1">
    <property type="nucleotide sequence ID" value="XM_001796111.1"/>
</dbReference>
<dbReference type="SMR" id="Q0UR48"/>
<dbReference type="FunCoup" id="Q0UR48">
    <property type="interactions" value="1087"/>
</dbReference>
<dbReference type="STRING" id="321614.Q0UR48"/>
<dbReference type="GeneID" id="5973040"/>
<dbReference type="KEGG" id="pno:SNOG_05766"/>
<dbReference type="VEuPathDB" id="FungiDB:JI435_057660"/>
<dbReference type="eggNOG" id="KOG0342">
    <property type="taxonomic scope" value="Eukaryota"/>
</dbReference>
<dbReference type="InParanoid" id="Q0UR48"/>
<dbReference type="OMA" id="LMEFHSQ"/>
<dbReference type="OrthoDB" id="10259640at2759"/>
<dbReference type="Proteomes" id="UP000001055">
    <property type="component" value="Unassembled WGS sequence"/>
</dbReference>
<dbReference type="GO" id="GO:0005730">
    <property type="term" value="C:nucleolus"/>
    <property type="evidence" value="ECO:0000318"/>
    <property type="project" value="GO_Central"/>
</dbReference>
<dbReference type="GO" id="GO:0005524">
    <property type="term" value="F:ATP binding"/>
    <property type="evidence" value="ECO:0007669"/>
    <property type="project" value="UniProtKB-KW"/>
</dbReference>
<dbReference type="GO" id="GO:0016887">
    <property type="term" value="F:ATP hydrolysis activity"/>
    <property type="evidence" value="ECO:0007669"/>
    <property type="project" value="RHEA"/>
</dbReference>
<dbReference type="GO" id="GO:0003723">
    <property type="term" value="F:RNA binding"/>
    <property type="evidence" value="ECO:0007669"/>
    <property type="project" value="UniProtKB-KW"/>
</dbReference>
<dbReference type="GO" id="GO:0003724">
    <property type="term" value="F:RNA helicase activity"/>
    <property type="evidence" value="ECO:0007669"/>
    <property type="project" value="UniProtKB-EC"/>
</dbReference>
<dbReference type="GO" id="GO:0000463">
    <property type="term" value="P:maturation of LSU-rRNA from tricistronic rRNA transcript (SSU-rRNA, 5.8S rRNA, LSU-rRNA)"/>
    <property type="evidence" value="ECO:0000318"/>
    <property type="project" value="GO_Central"/>
</dbReference>
<dbReference type="CDD" id="cd17942">
    <property type="entry name" value="DEADc_DDX18"/>
    <property type="match status" value="1"/>
</dbReference>
<dbReference type="CDD" id="cd18787">
    <property type="entry name" value="SF2_C_DEAD"/>
    <property type="match status" value="1"/>
</dbReference>
<dbReference type="FunFam" id="3.40.50.300:FF:000379">
    <property type="entry name" value="RNA helicase"/>
    <property type="match status" value="1"/>
</dbReference>
<dbReference type="FunFam" id="3.40.50.300:FF:000460">
    <property type="entry name" value="RNA helicase"/>
    <property type="match status" value="1"/>
</dbReference>
<dbReference type="Gene3D" id="3.40.50.300">
    <property type="entry name" value="P-loop containing nucleotide triphosphate hydrolases"/>
    <property type="match status" value="2"/>
</dbReference>
<dbReference type="InterPro" id="IPR044773">
    <property type="entry name" value="DDX18/Has1_DEADc"/>
</dbReference>
<dbReference type="InterPro" id="IPR011545">
    <property type="entry name" value="DEAD/DEAH_box_helicase_dom"/>
</dbReference>
<dbReference type="InterPro" id="IPR014001">
    <property type="entry name" value="Helicase_ATP-bd"/>
</dbReference>
<dbReference type="InterPro" id="IPR001650">
    <property type="entry name" value="Helicase_C-like"/>
</dbReference>
<dbReference type="InterPro" id="IPR027417">
    <property type="entry name" value="P-loop_NTPase"/>
</dbReference>
<dbReference type="InterPro" id="IPR000629">
    <property type="entry name" value="RNA-helicase_DEAD-box_CS"/>
</dbReference>
<dbReference type="InterPro" id="IPR014014">
    <property type="entry name" value="RNA_helicase_DEAD_Q_motif"/>
</dbReference>
<dbReference type="InterPro" id="IPR025313">
    <property type="entry name" value="SPB4-like_CTE"/>
</dbReference>
<dbReference type="PANTHER" id="PTHR24031">
    <property type="entry name" value="RNA HELICASE"/>
    <property type="match status" value="1"/>
</dbReference>
<dbReference type="Pfam" id="PF13959">
    <property type="entry name" value="CTE_SPB4"/>
    <property type="match status" value="1"/>
</dbReference>
<dbReference type="Pfam" id="PF00270">
    <property type="entry name" value="DEAD"/>
    <property type="match status" value="1"/>
</dbReference>
<dbReference type="Pfam" id="PF00271">
    <property type="entry name" value="Helicase_C"/>
    <property type="match status" value="1"/>
</dbReference>
<dbReference type="SMART" id="SM00487">
    <property type="entry name" value="DEXDc"/>
    <property type="match status" value="1"/>
</dbReference>
<dbReference type="SMART" id="SM01178">
    <property type="entry name" value="DUF4217"/>
    <property type="match status" value="1"/>
</dbReference>
<dbReference type="SMART" id="SM00490">
    <property type="entry name" value="HELICc"/>
    <property type="match status" value="1"/>
</dbReference>
<dbReference type="SUPFAM" id="SSF52540">
    <property type="entry name" value="P-loop containing nucleoside triphosphate hydrolases"/>
    <property type="match status" value="2"/>
</dbReference>
<dbReference type="PROSITE" id="PS00039">
    <property type="entry name" value="DEAD_ATP_HELICASE"/>
    <property type="match status" value="1"/>
</dbReference>
<dbReference type="PROSITE" id="PS51192">
    <property type="entry name" value="HELICASE_ATP_BIND_1"/>
    <property type="match status" value="1"/>
</dbReference>
<dbReference type="PROSITE" id="PS51194">
    <property type="entry name" value="HELICASE_CTER"/>
    <property type="match status" value="1"/>
</dbReference>
<dbReference type="PROSITE" id="PS51195">
    <property type="entry name" value="Q_MOTIF"/>
    <property type="match status" value="1"/>
</dbReference>
<comment type="function">
    <text>ATP-dependent RNA helicase involved in 40S ribosomal subunit biogenesis. Required for the processing and cleavage of 35S pre-rRNA at sites A0, A1, and A2, leading to mature 18S rRNA.</text>
</comment>
<comment type="catalytic activity">
    <reaction>
        <text>ATP + H2O = ADP + phosphate + H(+)</text>
        <dbReference type="Rhea" id="RHEA:13065"/>
        <dbReference type="ChEBI" id="CHEBI:15377"/>
        <dbReference type="ChEBI" id="CHEBI:15378"/>
        <dbReference type="ChEBI" id="CHEBI:30616"/>
        <dbReference type="ChEBI" id="CHEBI:43474"/>
        <dbReference type="ChEBI" id="CHEBI:456216"/>
        <dbReference type="EC" id="3.6.4.13"/>
    </reaction>
</comment>
<comment type="subunit">
    <text evidence="1">Associates in the nucleolus with the 60S and pre-60S ribosomal subunits.</text>
</comment>
<comment type="subcellular location">
    <subcellularLocation>
        <location evidence="1">Nucleus</location>
        <location evidence="1">Nucleolus</location>
    </subcellularLocation>
</comment>
<comment type="domain">
    <text>The Q motif is unique to and characteristic of the DEAD box family of RNA helicases and controls ATP binding and hydrolysis.</text>
</comment>
<comment type="similarity">
    <text evidence="5">Belongs to the DEAD box helicase family. DDX18/HAS1 subfamily.</text>
</comment>
<comment type="sequence caution" evidence="5">
    <conflict type="erroneous gene model prediction">
        <sequence resource="EMBL-CDS" id="EAT86830"/>
    </conflict>
</comment>
<name>HAS1_PHANO</name>
<accession>Q0UR48</accession>
<evidence type="ECO:0000250" key="1"/>
<evidence type="ECO:0000255" key="2">
    <source>
        <dbReference type="PROSITE-ProRule" id="PRU00541"/>
    </source>
</evidence>
<evidence type="ECO:0000255" key="3">
    <source>
        <dbReference type="PROSITE-ProRule" id="PRU00542"/>
    </source>
</evidence>
<evidence type="ECO:0000256" key="4">
    <source>
        <dbReference type="SAM" id="MobiDB-lite"/>
    </source>
</evidence>
<evidence type="ECO:0000305" key="5"/>
<keyword id="KW-0067">ATP-binding</keyword>
<keyword id="KW-0347">Helicase</keyword>
<keyword id="KW-0378">Hydrolase</keyword>
<keyword id="KW-0547">Nucleotide-binding</keyword>
<keyword id="KW-0539">Nucleus</keyword>
<keyword id="KW-0690">Ribosome biogenesis</keyword>
<keyword id="KW-0694">RNA-binding</keyword>
<keyword id="KW-0698">rRNA processing</keyword>
<sequence>MTAADIDSKKRKRKHKAKKGEEAEPVKAHTNGAAAVEKPRKKSKKEHTPEPEVEDVVADASENDVESGAEEDEEQVNAELKEIAAKAKKAKKAKAAQDEDEDEDAAGSGANALAVADLPSGTSIPTVDDPTRFDELNLSERTMEAIKTMGFESMTEIQRKAIPPLLSGKDVLGAAKTGSGKTLAFLIPAIEMLSSMRFKPRNGTGVIVVSPTRELALQIFGVARELMEKHSQTFGIVIGGANRRAEAEKLAKGVNLLIATPGRLLDHLHNTQGFVFKNLKSLIIDEADRILEVGFEDEMRSIIKILPTDRQTMLFSATQTTKVEDLARISLKAGPLYINVDYRKEHSTVEGLEQGYVICDSDTRFRLLFSFLKKHQKKKVIVFFSSCNSVKFYAELLNYIDLPVLELHGKLKQQARTNRFFEFCNAQSGTLICTDVAARGLDIPEVDWVIQFDPPDDPRDYIHRVGRTARGSEGKGRSLMFLLPSEIGFLKLLKEARVPLVEFELPANKILNIQSQLEALITKNYYLNKSAKDGYRSYLQAYASHSLRSVFDVHKLDLVKVAKSFGFSTPPRIDISLGASLSRDKKVEGRREYGRQPQQGRRPMKPNKRF</sequence>
<organism>
    <name type="scientific">Phaeosphaeria nodorum (strain SN15 / ATCC MYA-4574 / FGSC 10173)</name>
    <name type="common">Glume blotch fungus</name>
    <name type="synonym">Parastagonospora nodorum</name>
    <dbReference type="NCBI Taxonomy" id="321614"/>
    <lineage>
        <taxon>Eukaryota</taxon>
        <taxon>Fungi</taxon>
        <taxon>Dikarya</taxon>
        <taxon>Ascomycota</taxon>
        <taxon>Pezizomycotina</taxon>
        <taxon>Dothideomycetes</taxon>
        <taxon>Pleosporomycetidae</taxon>
        <taxon>Pleosporales</taxon>
        <taxon>Pleosporineae</taxon>
        <taxon>Phaeosphaeriaceae</taxon>
        <taxon>Parastagonospora</taxon>
    </lineage>
</organism>
<reference key="1">
    <citation type="journal article" date="2007" name="Plant Cell">
        <title>Dothideomycete-plant interactions illuminated by genome sequencing and EST analysis of the wheat pathogen Stagonospora nodorum.</title>
        <authorList>
            <person name="Hane J.K."/>
            <person name="Lowe R.G.T."/>
            <person name="Solomon P.S."/>
            <person name="Tan K.-C."/>
            <person name="Schoch C.L."/>
            <person name="Spatafora J.W."/>
            <person name="Crous P.W."/>
            <person name="Kodira C.D."/>
            <person name="Birren B.W."/>
            <person name="Galagan J.E."/>
            <person name="Torriani S.F.F."/>
            <person name="McDonald B.A."/>
            <person name="Oliver R.P."/>
        </authorList>
    </citation>
    <scope>NUCLEOTIDE SEQUENCE [LARGE SCALE GENOMIC DNA]</scope>
    <source>
        <strain>SN15 / ATCC MYA-4574 / FGSC 10173</strain>
    </source>
</reference>
<proteinExistence type="inferred from homology"/>